<accession>Q1QH71</accession>
<sequence>MSDASRISPLDQARILSEALPHMQQYDEETIVIKYGGHAMGAEDVARQFARDIVLLEQTAINPVVVHGGGPQIATMLQRLGIKSEFAAGLRITDAATIEIVEMVLAGSINKQLVGYINEAGGKAVGLCGKDGNMVTASKATRTIADPDSNIEKVVDLGFVGEPEKVDLTLLNQLIGHELIPVLAPLATSKGGQTFNVNADTFAGAVAGALKAKRLLLLTDVPGVLDKSKKLIPDLSIGDARKLIADGTISGGMIPKVETCIYALEQGVGGVVIIDGKTPHAVLLELFTDQGTGTLIHK</sequence>
<proteinExistence type="inferred from homology"/>
<organism>
    <name type="scientific">Nitrobacter hamburgensis (strain DSM 10229 / NCIMB 13809 / X14)</name>
    <dbReference type="NCBI Taxonomy" id="323097"/>
    <lineage>
        <taxon>Bacteria</taxon>
        <taxon>Pseudomonadati</taxon>
        <taxon>Pseudomonadota</taxon>
        <taxon>Alphaproteobacteria</taxon>
        <taxon>Hyphomicrobiales</taxon>
        <taxon>Nitrobacteraceae</taxon>
        <taxon>Nitrobacter</taxon>
    </lineage>
</organism>
<protein>
    <recommendedName>
        <fullName evidence="1">Acetylglutamate kinase</fullName>
        <ecNumber evidence="1">2.7.2.8</ecNumber>
    </recommendedName>
    <alternativeName>
        <fullName evidence="1">N-acetyl-L-glutamate 5-phosphotransferase</fullName>
    </alternativeName>
    <alternativeName>
        <fullName evidence="1">NAG kinase</fullName>
        <shortName evidence="1">NAGK</shortName>
    </alternativeName>
</protein>
<evidence type="ECO:0000255" key="1">
    <source>
        <dbReference type="HAMAP-Rule" id="MF_00082"/>
    </source>
</evidence>
<name>ARGB_NITHX</name>
<reference key="1">
    <citation type="submission" date="2006-03" db="EMBL/GenBank/DDBJ databases">
        <title>Complete sequence of chromosome of Nitrobacter hamburgensis X14.</title>
        <authorList>
            <consortium name="US DOE Joint Genome Institute"/>
            <person name="Copeland A."/>
            <person name="Lucas S."/>
            <person name="Lapidus A."/>
            <person name="Barry K."/>
            <person name="Detter J.C."/>
            <person name="Glavina del Rio T."/>
            <person name="Hammon N."/>
            <person name="Israni S."/>
            <person name="Dalin E."/>
            <person name="Tice H."/>
            <person name="Pitluck S."/>
            <person name="Chain P."/>
            <person name="Malfatti S."/>
            <person name="Shin M."/>
            <person name="Vergez L."/>
            <person name="Schmutz J."/>
            <person name="Larimer F."/>
            <person name="Land M."/>
            <person name="Hauser L."/>
            <person name="Kyrpides N."/>
            <person name="Ivanova N."/>
            <person name="Ward B."/>
            <person name="Arp D."/>
            <person name="Klotz M."/>
            <person name="Stein L."/>
            <person name="O'Mullan G."/>
            <person name="Starkenburg S."/>
            <person name="Sayavedra L."/>
            <person name="Poret-Peterson A.T."/>
            <person name="Gentry M.E."/>
            <person name="Bruce D."/>
            <person name="Richardson P."/>
        </authorList>
    </citation>
    <scope>NUCLEOTIDE SEQUENCE [LARGE SCALE GENOMIC DNA]</scope>
    <source>
        <strain>DSM 10229 / NCIMB 13809 / X14</strain>
    </source>
</reference>
<gene>
    <name evidence="1" type="primary">argB</name>
    <name type="ordered locus">Nham_3700</name>
</gene>
<comment type="function">
    <text evidence="1">Catalyzes the ATP-dependent phosphorylation of N-acetyl-L-glutamate.</text>
</comment>
<comment type="catalytic activity">
    <reaction evidence="1">
        <text>N-acetyl-L-glutamate + ATP = N-acetyl-L-glutamyl 5-phosphate + ADP</text>
        <dbReference type="Rhea" id="RHEA:14629"/>
        <dbReference type="ChEBI" id="CHEBI:30616"/>
        <dbReference type="ChEBI" id="CHEBI:44337"/>
        <dbReference type="ChEBI" id="CHEBI:57936"/>
        <dbReference type="ChEBI" id="CHEBI:456216"/>
        <dbReference type="EC" id="2.7.2.8"/>
    </reaction>
</comment>
<comment type="pathway">
    <text evidence="1">Amino-acid biosynthesis; L-arginine biosynthesis; N(2)-acetyl-L-ornithine from L-glutamate: step 2/4.</text>
</comment>
<comment type="subcellular location">
    <subcellularLocation>
        <location evidence="1">Cytoplasm</location>
    </subcellularLocation>
</comment>
<comment type="similarity">
    <text evidence="1">Belongs to the acetylglutamate kinase family. ArgB subfamily.</text>
</comment>
<dbReference type="EC" id="2.7.2.8" evidence="1"/>
<dbReference type="EMBL" id="CP000319">
    <property type="protein sequence ID" value="ABE64426.1"/>
    <property type="molecule type" value="Genomic_DNA"/>
</dbReference>
<dbReference type="RefSeq" id="WP_011512065.1">
    <property type="nucleotide sequence ID" value="NC_007964.1"/>
</dbReference>
<dbReference type="SMR" id="Q1QH71"/>
<dbReference type="STRING" id="323097.Nham_3700"/>
<dbReference type="KEGG" id="nha:Nham_3700"/>
<dbReference type="eggNOG" id="COG0548">
    <property type="taxonomic scope" value="Bacteria"/>
</dbReference>
<dbReference type="HOGENOM" id="CLU_053680_0_0_5"/>
<dbReference type="OrthoDB" id="9803155at2"/>
<dbReference type="UniPathway" id="UPA00068">
    <property type="reaction ID" value="UER00107"/>
</dbReference>
<dbReference type="Proteomes" id="UP000001953">
    <property type="component" value="Chromosome"/>
</dbReference>
<dbReference type="GO" id="GO:0005737">
    <property type="term" value="C:cytoplasm"/>
    <property type="evidence" value="ECO:0007669"/>
    <property type="project" value="UniProtKB-SubCell"/>
</dbReference>
<dbReference type="GO" id="GO:0003991">
    <property type="term" value="F:acetylglutamate kinase activity"/>
    <property type="evidence" value="ECO:0007669"/>
    <property type="project" value="UniProtKB-UniRule"/>
</dbReference>
<dbReference type="GO" id="GO:0005524">
    <property type="term" value="F:ATP binding"/>
    <property type="evidence" value="ECO:0007669"/>
    <property type="project" value="UniProtKB-UniRule"/>
</dbReference>
<dbReference type="GO" id="GO:0042450">
    <property type="term" value="P:arginine biosynthetic process via ornithine"/>
    <property type="evidence" value="ECO:0007669"/>
    <property type="project" value="UniProtKB-UniRule"/>
</dbReference>
<dbReference type="GO" id="GO:0006526">
    <property type="term" value="P:L-arginine biosynthetic process"/>
    <property type="evidence" value="ECO:0007669"/>
    <property type="project" value="UniProtKB-UniPathway"/>
</dbReference>
<dbReference type="CDD" id="cd04250">
    <property type="entry name" value="AAK_NAGK-C"/>
    <property type="match status" value="1"/>
</dbReference>
<dbReference type="FunFam" id="3.40.1160.10:FF:000004">
    <property type="entry name" value="Acetylglutamate kinase"/>
    <property type="match status" value="1"/>
</dbReference>
<dbReference type="Gene3D" id="3.40.1160.10">
    <property type="entry name" value="Acetylglutamate kinase-like"/>
    <property type="match status" value="1"/>
</dbReference>
<dbReference type="HAMAP" id="MF_00082">
    <property type="entry name" value="ArgB"/>
    <property type="match status" value="1"/>
</dbReference>
<dbReference type="InterPro" id="IPR036393">
    <property type="entry name" value="AceGlu_kinase-like_sf"/>
</dbReference>
<dbReference type="InterPro" id="IPR004662">
    <property type="entry name" value="AcgluKinase_fam"/>
</dbReference>
<dbReference type="InterPro" id="IPR037528">
    <property type="entry name" value="ArgB"/>
</dbReference>
<dbReference type="InterPro" id="IPR001048">
    <property type="entry name" value="Asp/Glu/Uridylate_kinase"/>
</dbReference>
<dbReference type="InterPro" id="IPR041727">
    <property type="entry name" value="NAGK-C"/>
</dbReference>
<dbReference type="NCBIfam" id="TIGR00761">
    <property type="entry name" value="argB"/>
    <property type="match status" value="1"/>
</dbReference>
<dbReference type="PANTHER" id="PTHR23342">
    <property type="entry name" value="N-ACETYLGLUTAMATE SYNTHASE"/>
    <property type="match status" value="1"/>
</dbReference>
<dbReference type="PANTHER" id="PTHR23342:SF0">
    <property type="entry name" value="N-ACETYLGLUTAMATE SYNTHASE, MITOCHONDRIAL"/>
    <property type="match status" value="1"/>
</dbReference>
<dbReference type="Pfam" id="PF00696">
    <property type="entry name" value="AA_kinase"/>
    <property type="match status" value="1"/>
</dbReference>
<dbReference type="PIRSF" id="PIRSF000728">
    <property type="entry name" value="NAGK"/>
    <property type="match status" value="1"/>
</dbReference>
<dbReference type="SUPFAM" id="SSF53633">
    <property type="entry name" value="Carbamate kinase-like"/>
    <property type="match status" value="1"/>
</dbReference>
<feature type="chain" id="PRO_0000264723" description="Acetylglutamate kinase">
    <location>
        <begin position="1"/>
        <end position="298"/>
    </location>
</feature>
<feature type="binding site" evidence="1">
    <location>
        <begin position="69"/>
        <end position="70"/>
    </location>
    <ligand>
        <name>substrate</name>
    </ligand>
</feature>
<feature type="binding site" evidence="1">
    <location>
        <position position="91"/>
    </location>
    <ligand>
        <name>substrate</name>
    </ligand>
</feature>
<feature type="binding site" evidence="1">
    <location>
        <position position="196"/>
    </location>
    <ligand>
        <name>substrate</name>
    </ligand>
</feature>
<feature type="site" description="Transition state stabilizer" evidence="1">
    <location>
        <position position="34"/>
    </location>
</feature>
<feature type="site" description="Transition state stabilizer" evidence="1">
    <location>
        <position position="256"/>
    </location>
</feature>
<keyword id="KW-0028">Amino-acid biosynthesis</keyword>
<keyword id="KW-0055">Arginine biosynthesis</keyword>
<keyword id="KW-0067">ATP-binding</keyword>
<keyword id="KW-0963">Cytoplasm</keyword>
<keyword id="KW-0418">Kinase</keyword>
<keyword id="KW-0547">Nucleotide-binding</keyword>
<keyword id="KW-1185">Reference proteome</keyword>
<keyword id="KW-0808">Transferase</keyword>